<dbReference type="EC" id="3.6.5.2" evidence="2"/>
<dbReference type="EMBL" id="X80332">
    <property type="protein sequence ID" value="CAA56582.1"/>
    <property type="molecule type" value="mRNA"/>
</dbReference>
<dbReference type="EMBL" id="M79310">
    <property type="protein sequence ID" value="AAK14834.1"/>
    <property type="molecule type" value="mRNA"/>
</dbReference>
<dbReference type="CCDS" id="CCDS22095.1"/>
<dbReference type="PIR" id="I48728">
    <property type="entry name" value="S46950"/>
</dbReference>
<dbReference type="RefSeq" id="NP_035357.1">
    <property type="nucleotide sequence ID" value="NM_011227.2"/>
</dbReference>
<dbReference type="SMR" id="P35295"/>
<dbReference type="FunCoup" id="P35295">
    <property type="interactions" value="1166"/>
</dbReference>
<dbReference type="STRING" id="10090.ENSMUSP00000033900"/>
<dbReference type="iPTMnet" id="P35295"/>
<dbReference type="PhosphoSitePlus" id="P35295"/>
<dbReference type="PaxDb" id="10090-ENSMUSP00000033900"/>
<dbReference type="ProteomicsDB" id="255064"/>
<dbReference type="Antibodypedia" id="25565">
    <property type="antibodies" value="279 antibodies from 28 providers"/>
</dbReference>
<dbReference type="DNASU" id="19332"/>
<dbReference type="Ensembl" id="ENSMUST00000033900.7">
    <property type="protein sequence ID" value="ENSMUSP00000033900.6"/>
    <property type="gene ID" value="ENSMUSG00000031504.7"/>
</dbReference>
<dbReference type="GeneID" id="19332"/>
<dbReference type="KEGG" id="mmu:19332"/>
<dbReference type="UCSC" id="uc009kvd.1">
    <property type="organism name" value="mouse"/>
</dbReference>
<dbReference type="AGR" id="MGI:102789"/>
<dbReference type="CTD" id="55647"/>
<dbReference type="MGI" id="MGI:102789">
    <property type="gene designation" value="Rab20"/>
</dbReference>
<dbReference type="VEuPathDB" id="HostDB:ENSMUSG00000031504"/>
<dbReference type="eggNOG" id="KOG0092">
    <property type="taxonomic scope" value="Eukaryota"/>
</dbReference>
<dbReference type="GeneTree" id="ENSGT00940000161024"/>
<dbReference type="HOGENOM" id="CLU_041217_12_0_1"/>
<dbReference type="InParanoid" id="P35295"/>
<dbReference type="OMA" id="DQTECEE"/>
<dbReference type="OrthoDB" id="9938508at2759"/>
<dbReference type="PhylomeDB" id="P35295"/>
<dbReference type="TreeFam" id="TF331574"/>
<dbReference type="Reactome" id="R-MMU-8873719">
    <property type="pathway name" value="RAB geranylgeranylation"/>
</dbReference>
<dbReference type="BioGRID-ORCS" id="19332">
    <property type="hits" value="3 hits in 77 CRISPR screens"/>
</dbReference>
<dbReference type="ChiTaRS" id="Rab20">
    <property type="organism name" value="mouse"/>
</dbReference>
<dbReference type="PRO" id="PR:P35295"/>
<dbReference type="Proteomes" id="UP000000589">
    <property type="component" value="Chromosome 8"/>
</dbReference>
<dbReference type="RNAct" id="P35295">
    <property type="molecule type" value="protein"/>
</dbReference>
<dbReference type="Bgee" id="ENSMUSG00000031504">
    <property type="expression patterns" value="Expressed in cleaving embryo and 140 other cell types or tissues"/>
</dbReference>
<dbReference type="ExpressionAtlas" id="P35295">
    <property type="expression patterns" value="baseline and differential"/>
</dbReference>
<dbReference type="GO" id="GO:0005794">
    <property type="term" value="C:Golgi apparatus"/>
    <property type="evidence" value="ECO:0007669"/>
    <property type="project" value="UniProtKB-SubCell"/>
</dbReference>
<dbReference type="GO" id="GO:0045335">
    <property type="term" value="C:phagocytic vesicle"/>
    <property type="evidence" value="ECO:0000314"/>
    <property type="project" value="MGI"/>
</dbReference>
<dbReference type="GO" id="GO:0030670">
    <property type="term" value="C:phagocytic vesicle membrane"/>
    <property type="evidence" value="ECO:0007669"/>
    <property type="project" value="UniProtKB-SubCell"/>
</dbReference>
<dbReference type="GO" id="GO:0005525">
    <property type="term" value="F:GTP binding"/>
    <property type="evidence" value="ECO:0007669"/>
    <property type="project" value="UniProtKB-KW"/>
</dbReference>
<dbReference type="GO" id="GO:0003924">
    <property type="term" value="F:GTPase activity"/>
    <property type="evidence" value="ECO:0007669"/>
    <property type="project" value="InterPro"/>
</dbReference>
<dbReference type="GO" id="GO:0071346">
    <property type="term" value="P:cellular response to type II interferon"/>
    <property type="evidence" value="ECO:0000314"/>
    <property type="project" value="MGI"/>
</dbReference>
<dbReference type="GO" id="GO:0090383">
    <property type="term" value="P:phagosome acidification"/>
    <property type="evidence" value="ECO:0000250"/>
    <property type="project" value="UniProtKB"/>
</dbReference>
<dbReference type="GO" id="GO:0090385">
    <property type="term" value="P:phagosome-lysosome fusion"/>
    <property type="evidence" value="ECO:0000250"/>
    <property type="project" value="UniProtKB"/>
</dbReference>
<dbReference type="GO" id="GO:0015031">
    <property type="term" value="P:protein transport"/>
    <property type="evidence" value="ECO:0007669"/>
    <property type="project" value="UniProtKB-KW"/>
</dbReference>
<dbReference type="CDD" id="cd04126">
    <property type="entry name" value="Rab20"/>
    <property type="match status" value="1"/>
</dbReference>
<dbReference type="FunFam" id="3.40.50.300:FF:001257">
    <property type="entry name" value="RAB20, member RAS oncogene family"/>
    <property type="match status" value="1"/>
</dbReference>
<dbReference type="Gene3D" id="3.40.50.300">
    <property type="entry name" value="P-loop containing nucleotide triphosphate hydrolases"/>
    <property type="match status" value="1"/>
</dbReference>
<dbReference type="InterPro" id="IPR027417">
    <property type="entry name" value="P-loop_NTPase"/>
</dbReference>
<dbReference type="InterPro" id="IPR041836">
    <property type="entry name" value="Rab20"/>
</dbReference>
<dbReference type="InterPro" id="IPR005225">
    <property type="entry name" value="Small_GTP-bd"/>
</dbReference>
<dbReference type="InterPro" id="IPR001806">
    <property type="entry name" value="Small_GTPase"/>
</dbReference>
<dbReference type="NCBIfam" id="TIGR00231">
    <property type="entry name" value="small_GTP"/>
    <property type="match status" value="1"/>
</dbReference>
<dbReference type="PANTHER" id="PTHR24073">
    <property type="entry name" value="DRAB5-RELATED"/>
    <property type="match status" value="1"/>
</dbReference>
<dbReference type="Pfam" id="PF00071">
    <property type="entry name" value="Ras"/>
    <property type="match status" value="1"/>
</dbReference>
<dbReference type="PRINTS" id="PR00449">
    <property type="entry name" value="RASTRNSFRMNG"/>
</dbReference>
<dbReference type="SMART" id="SM00175">
    <property type="entry name" value="RAB"/>
    <property type="match status" value="1"/>
</dbReference>
<dbReference type="SMART" id="SM00173">
    <property type="entry name" value="RAS"/>
    <property type="match status" value="1"/>
</dbReference>
<dbReference type="SMART" id="SM00174">
    <property type="entry name" value="RHO"/>
    <property type="match status" value="1"/>
</dbReference>
<dbReference type="SUPFAM" id="SSF52540">
    <property type="entry name" value="P-loop containing nucleoside triphosphate hydrolases"/>
    <property type="match status" value="1"/>
</dbReference>
<dbReference type="PROSITE" id="PS51419">
    <property type="entry name" value="RAB"/>
    <property type="match status" value="1"/>
</dbReference>
<evidence type="ECO:0000250" key="1"/>
<evidence type="ECO:0000250" key="2">
    <source>
        <dbReference type="UniProtKB" id="P62820"/>
    </source>
</evidence>
<evidence type="ECO:0000250" key="3">
    <source>
        <dbReference type="UniProtKB" id="Q9NX57"/>
    </source>
</evidence>
<evidence type="ECO:0000256" key="4">
    <source>
        <dbReference type="SAM" id="MobiDB-lite"/>
    </source>
</evidence>
<evidence type="ECO:0000269" key="5">
    <source>
    </source>
</evidence>
<evidence type="ECO:0000305" key="6"/>
<evidence type="ECO:0000312" key="7">
    <source>
        <dbReference type="MGI" id="MGI:102789"/>
    </source>
</evidence>
<sequence>MRKPDGKIVLLGDMNVGKTSLLQRYMERRFPDTVSTVGGAFYLKQWRSFNISIWDTAGREQFHGLGSLYCRGAAAIILTYDVNHPQSLFELEDRFLGLTETANNDCLFAIVGNKVDLTSERDTEGGEKEGPASGKVGSCVSTKVPKQVQPEDAVALYKKILKYKMLDEREMPAAEQMCFETSAKTGYNVDLLFETLFDLVVPMIMRQRAEESDQTVDIASCKTPKQTRSGCCA</sequence>
<accession>P35295</accession>
<proteinExistence type="evidence at transcript level"/>
<organism>
    <name type="scientific">Mus musculus</name>
    <name type="common">Mouse</name>
    <dbReference type="NCBI Taxonomy" id="10090"/>
    <lineage>
        <taxon>Eukaryota</taxon>
        <taxon>Metazoa</taxon>
        <taxon>Chordata</taxon>
        <taxon>Craniata</taxon>
        <taxon>Vertebrata</taxon>
        <taxon>Euteleostomi</taxon>
        <taxon>Mammalia</taxon>
        <taxon>Eutheria</taxon>
        <taxon>Euarchontoglires</taxon>
        <taxon>Glires</taxon>
        <taxon>Rodentia</taxon>
        <taxon>Myomorpha</taxon>
        <taxon>Muroidea</taxon>
        <taxon>Muridae</taxon>
        <taxon>Murinae</taxon>
        <taxon>Mus</taxon>
        <taxon>Mus</taxon>
    </lineage>
</organism>
<comment type="function">
    <text evidence="1">Plays a role in apical endocytosis/recycling. Plays a role in the maturation and acidification of phagosomes that engulf pathogens, such as S.aureus and Mycobacterium. Plays a role in the fusion of phagosomes with lysosomes (By similarity).</text>
</comment>
<comment type="catalytic activity">
    <reaction evidence="2">
        <text>GTP + H2O = GDP + phosphate + H(+)</text>
        <dbReference type="Rhea" id="RHEA:19669"/>
        <dbReference type="ChEBI" id="CHEBI:15377"/>
        <dbReference type="ChEBI" id="CHEBI:15378"/>
        <dbReference type="ChEBI" id="CHEBI:37565"/>
        <dbReference type="ChEBI" id="CHEBI:43474"/>
        <dbReference type="ChEBI" id="CHEBI:58189"/>
        <dbReference type="EC" id="3.6.5.2"/>
    </reaction>
    <physiologicalReaction direction="left-to-right" evidence="2">
        <dbReference type="Rhea" id="RHEA:19670"/>
    </physiologicalReaction>
</comment>
<comment type="cofactor">
    <cofactor evidence="2">
        <name>Mg(2+)</name>
        <dbReference type="ChEBI" id="CHEBI:18420"/>
    </cofactor>
</comment>
<comment type="activity regulation">
    <text evidence="2">Regulated by guanine nucleotide exchange factors (GEFs) which promote the exchange of bound GDP for free GTP. Regulated by GTPase activating proteins (GAPs) which increase the GTP hydrolysis activity. Inhibited by GDP dissociation inhibitors (GDIs).</text>
</comment>
<comment type="subcellular location">
    <subcellularLocation>
        <location evidence="3">Cytoplasmic vesicle</location>
        <location evidence="3">Phagosome</location>
    </subcellularLocation>
    <subcellularLocation>
        <location evidence="6">Cytoplasmic vesicle</location>
        <location evidence="6">Phagosome membrane</location>
        <topology evidence="6">Lipid-anchor</topology>
        <orientation evidence="6">Cytoplasmic side</orientation>
    </subcellularLocation>
    <subcellularLocation>
        <location evidence="3">Golgi apparatus</location>
    </subcellularLocation>
    <text evidence="3 5">Recruited to phagosomes containing S.aureus or Mycobacterium (By similarity). Highly enriched on apical endocytic structures in polarized epithelial cells of kidney proximal tubules (PubMed:7706395).</text>
</comment>
<comment type="tissue specificity">
    <text>Present in a variety of tissues, but not in brain.</text>
</comment>
<comment type="domain">
    <text evidence="2">Switch 1, switch 2 and the interswitch regions are characteristic of Rab GTPases and mediate the interactions with Rab downstream effectors. The switch regions undergo conformational changes upon nucleotide binding which drive interaction with specific sets of effector proteins, with most effectors only binding to GTP-bound Rab.</text>
</comment>
<comment type="similarity">
    <text evidence="6">Belongs to the small GTPase superfamily. Rab family.</text>
</comment>
<protein>
    <recommendedName>
        <fullName>Ras-related protein Rab-20</fullName>
        <ecNumber evidence="2">3.6.5.2</ecNumber>
    </recommendedName>
</protein>
<keyword id="KW-0968">Cytoplasmic vesicle</keyword>
<keyword id="KW-0333">Golgi apparatus</keyword>
<keyword id="KW-0342">GTP-binding</keyword>
<keyword id="KW-0378">Hydrolase</keyword>
<keyword id="KW-0449">Lipoprotein</keyword>
<keyword id="KW-0460">Magnesium</keyword>
<keyword id="KW-0472">Membrane</keyword>
<keyword id="KW-0479">Metal-binding</keyword>
<keyword id="KW-0547">Nucleotide-binding</keyword>
<keyword id="KW-0636">Prenylation</keyword>
<keyword id="KW-0653">Protein transport</keyword>
<keyword id="KW-1185">Reference proteome</keyword>
<keyword id="KW-0813">Transport</keyword>
<reference key="1">
    <citation type="journal article" date="1994" name="J. Cell Sci.">
        <title>Cloning and subcellular localization of novel rab proteins reveals polarized and cell type-specific expression.</title>
        <authorList>
            <person name="Luetcke A."/>
            <person name="Parton R.G."/>
            <person name="Murphy C."/>
            <person name="Olkkonen V.M."/>
            <person name="Dupree P."/>
            <person name="Valencia A."/>
            <person name="Simons K."/>
            <person name="Zerial M."/>
        </authorList>
    </citation>
    <scope>NUCLEOTIDE SEQUENCE [MRNA]</scope>
    <scope>SUBCELLULAR LOCATION</scope>
    <source>
        <tissue>Kidney</tissue>
    </source>
</reference>
<reference key="2">
    <citation type="journal article" date="1992" name="Gene">
        <title>The complexity of the Rab and Rho GTP-binding protein subfamilies revealed by a PCR cloning approach.</title>
        <authorList>
            <person name="Chavrier P."/>
            <person name="Simons K."/>
            <person name="Zerial M."/>
        </authorList>
    </citation>
    <scope>NUCLEOTIDE SEQUENCE [MRNA] OF 1-60</scope>
    <source>
        <tissue>Kidney</tissue>
    </source>
</reference>
<name>RAB20_MOUSE</name>
<feature type="chain" id="PRO_0000121203" description="Ras-related protein Rab-20">
    <location>
        <begin position="1"/>
        <end position="233"/>
    </location>
</feature>
<feature type="region of interest" description="Disordered" evidence="4">
    <location>
        <begin position="119"/>
        <end position="138"/>
    </location>
</feature>
<feature type="short sequence motif" description="Switch 1" evidence="2">
    <location>
        <begin position="28"/>
        <end position="41"/>
    </location>
</feature>
<feature type="short sequence motif" description="Switch 2" evidence="2">
    <location>
        <begin position="55"/>
        <end position="72"/>
    </location>
</feature>
<feature type="compositionally biased region" description="Basic and acidic residues" evidence="4">
    <location>
        <begin position="119"/>
        <end position="130"/>
    </location>
</feature>
<feature type="binding site" evidence="2">
    <location>
        <position position="17"/>
    </location>
    <ligand>
        <name>GTP</name>
        <dbReference type="ChEBI" id="CHEBI:37565"/>
    </ligand>
</feature>
<feature type="binding site" evidence="2">
    <location>
        <position position="18"/>
    </location>
    <ligand>
        <name>GTP</name>
        <dbReference type="ChEBI" id="CHEBI:37565"/>
    </ligand>
</feature>
<feature type="binding site" evidence="2">
    <location>
        <position position="19"/>
    </location>
    <ligand>
        <name>GTP</name>
        <dbReference type="ChEBI" id="CHEBI:37565"/>
    </ligand>
</feature>
<feature type="binding site" evidence="2">
    <location>
        <position position="19"/>
    </location>
    <ligand>
        <name>Mg(2+)</name>
        <dbReference type="ChEBI" id="CHEBI:18420"/>
    </ligand>
</feature>
<feature type="binding site" evidence="2">
    <location>
        <position position="32"/>
    </location>
    <ligand>
        <name>GTP</name>
        <dbReference type="ChEBI" id="CHEBI:37565"/>
    </ligand>
</feature>
<feature type="binding site" evidence="2">
    <location>
        <position position="36"/>
    </location>
    <ligand>
        <name>GTP</name>
        <dbReference type="ChEBI" id="CHEBI:37565"/>
    </ligand>
</feature>
<feature type="binding site" evidence="2">
    <location>
        <position position="36"/>
    </location>
    <ligand>
        <name>Mg(2+)</name>
        <dbReference type="ChEBI" id="CHEBI:18420"/>
    </ligand>
</feature>
<feature type="binding site" evidence="2">
    <location>
        <position position="55"/>
    </location>
    <ligand>
        <name>Mg(2+)</name>
        <dbReference type="ChEBI" id="CHEBI:18420"/>
    </ligand>
</feature>
<feature type="binding site" evidence="2">
    <location>
        <position position="58"/>
    </location>
    <ligand>
        <name>GTP</name>
        <dbReference type="ChEBI" id="CHEBI:37565"/>
    </ligand>
</feature>
<feature type="binding site" evidence="2">
    <location>
        <position position="113"/>
    </location>
    <ligand>
        <name>GTP</name>
        <dbReference type="ChEBI" id="CHEBI:37565"/>
    </ligand>
</feature>
<feature type="binding site" evidence="2">
    <location>
        <position position="114"/>
    </location>
    <ligand>
        <name>GTP</name>
        <dbReference type="ChEBI" id="CHEBI:37565"/>
    </ligand>
</feature>
<feature type="binding site" evidence="2">
    <location>
        <position position="116"/>
    </location>
    <ligand>
        <name>GTP</name>
        <dbReference type="ChEBI" id="CHEBI:37565"/>
    </ligand>
</feature>
<feature type="binding site" evidence="2">
    <location>
        <position position="183"/>
    </location>
    <ligand>
        <name>GTP</name>
        <dbReference type="ChEBI" id="CHEBI:37565"/>
    </ligand>
</feature>
<feature type="binding site" evidence="2">
    <location>
        <position position="184"/>
    </location>
    <ligand>
        <name>GTP</name>
        <dbReference type="ChEBI" id="CHEBI:37565"/>
    </ligand>
</feature>
<feature type="lipid moiety-binding region" description="S-geranylgeranyl cysteine" evidence="1">
    <location>
        <position position="231"/>
    </location>
</feature>
<feature type="lipid moiety-binding region" description="S-geranylgeranyl cysteine" evidence="1">
    <location>
        <position position="232"/>
    </location>
</feature>
<gene>
    <name evidence="7" type="primary">Rab20</name>
</gene>